<protein>
    <recommendedName>
        <fullName>Uncharacterized protein AF_1501</fullName>
    </recommendedName>
</protein>
<proteinExistence type="predicted"/>
<feature type="chain" id="PRO_0000128012" description="Uncharacterized protein AF_1501">
    <location>
        <begin position="1"/>
        <end position="247"/>
    </location>
</feature>
<accession>O28771</accession>
<name>Y1501_ARCFU</name>
<sequence>MMIPKGEVVELGKRGNFRDILKELSATGFTGYLEVSYKKGELSRAKVLFSNGKIVAAGIKRVISKSEIVGEKALEELLGLESCVVDVYALDEGKVAKALEWNRNAVVEHLPETEVEVEGGLTEEIITTPDEREAILKKYGIKMPSEEEIDQIIMNALDGSYDVIAATTSAPGDFESLKNSLISTAELYLGKMSKKVVDVINDCKSAEELVERFDEIRSAAKSLVIFIPRKKIDEMLSEMERLIGESI</sequence>
<keyword id="KW-1185">Reference proteome</keyword>
<organism>
    <name type="scientific">Archaeoglobus fulgidus (strain ATCC 49558 / DSM 4304 / JCM 9628 / NBRC 100126 / VC-16)</name>
    <dbReference type="NCBI Taxonomy" id="224325"/>
    <lineage>
        <taxon>Archaea</taxon>
        <taxon>Methanobacteriati</taxon>
        <taxon>Methanobacteriota</taxon>
        <taxon>Archaeoglobi</taxon>
        <taxon>Archaeoglobales</taxon>
        <taxon>Archaeoglobaceae</taxon>
        <taxon>Archaeoglobus</taxon>
    </lineage>
</organism>
<dbReference type="EMBL" id="AE000782">
    <property type="protein sequence ID" value="AAB89756.1"/>
    <property type="molecule type" value="Genomic_DNA"/>
</dbReference>
<dbReference type="PIR" id="D69437">
    <property type="entry name" value="D69437"/>
</dbReference>
<dbReference type="RefSeq" id="WP_010878998.1">
    <property type="nucleotide sequence ID" value="NC_000917.1"/>
</dbReference>
<dbReference type="STRING" id="224325.AF_1501"/>
<dbReference type="PaxDb" id="224325-AF_1501"/>
<dbReference type="EnsemblBacteria" id="AAB89756">
    <property type="protein sequence ID" value="AAB89756"/>
    <property type="gene ID" value="AF_1501"/>
</dbReference>
<dbReference type="KEGG" id="afu:AF_1501"/>
<dbReference type="eggNOG" id="arCOG06658">
    <property type="taxonomic scope" value="Archaea"/>
</dbReference>
<dbReference type="HOGENOM" id="CLU_1122571_0_0_2"/>
<dbReference type="Proteomes" id="UP000002199">
    <property type="component" value="Chromosome"/>
</dbReference>
<dbReference type="InterPro" id="IPR019249">
    <property type="entry name" value="DUF2226"/>
</dbReference>
<dbReference type="Pfam" id="PF09987">
    <property type="entry name" value="DUF2226"/>
    <property type="match status" value="1"/>
</dbReference>
<reference key="1">
    <citation type="journal article" date="1997" name="Nature">
        <title>The complete genome sequence of the hyperthermophilic, sulphate-reducing archaeon Archaeoglobus fulgidus.</title>
        <authorList>
            <person name="Klenk H.-P."/>
            <person name="Clayton R.A."/>
            <person name="Tomb J.-F."/>
            <person name="White O."/>
            <person name="Nelson K.E."/>
            <person name="Ketchum K.A."/>
            <person name="Dodson R.J."/>
            <person name="Gwinn M.L."/>
            <person name="Hickey E.K."/>
            <person name="Peterson J.D."/>
            <person name="Richardson D.L."/>
            <person name="Kerlavage A.R."/>
            <person name="Graham D.E."/>
            <person name="Kyrpides N.C."/>
            <person name="Fleischmann R.D."/>
            <person name="Quackenbush J."/>
            <person name="Lee N.H."/>
            <person name="Sutton G.G."/>
            <person name="Gill S.R."/>
            <person name="Kirkness E.F."/>
            <person name="Dougherty B.A."/>
            <person name="McKenney K."/>
            <person name="Adams M.D."/>
            <person name="Loftus B.J."/>
            <person name="Peterson S.N."/>
            <person name="Reich C.I."/>
            <person name="McNeil L.K."/>
            <person name="Badger J.H."/>
            <person name="Glodek A."/>
            <person name="Zhou L."/>
            <person name="Overbeek R."/>
            <person name="Gocayne J.D."/>
            <person name="Weidman J.F."/>
            <person name="McDonald L.A."/>
            <person name="Utterback T.R."/>
            <person name="Cotton M.D."/>
            <person name="Spriggs T."/>
            <person name="Artiach P."/>
            <person name="Kaine B.P."/>
            <person name="Sykes S.M."/>
            <person name="Sadow P.W."/>
            <person name="D'Andrea K.P."/>
            <person name="Bowman C."/>
            <person name="Fujii C."/>
            <person name="Garland S.A."/>
            <person name="Mason T.M."/>
            <person name="Olsen G.J."/>
            <person name="Fraser C.M."/>
            <person name="Smith H.O."/>
            <person name="Woese C.R."/>
            <person name="Venter J.C."/>
        </authorList>
    </citation>
    <scope>NUCLEOTIDE SEQUENCE [LARGE SCALE GENOMIC DNA]</scope>
    <source>
        <strain>ATCC 49558 / DSM 4304 / JCM 9628 / NBRC 100126 / VC-16</strain>
    </source>
</reference>
<gene>
    <name type="ordered locus">AF_1501</name>
</gene>